<protein>
    <recommendedName>
        <fullName evidence="1">Large ribosomal subunit protein bL35</fullName>
    </recommendedName>
    <alternativeName>
        <fullName evidence="2">50S ribosomal protein L35</fullName>
    </alternativeName>
</protein>
<proteinExistence type="inferred from homology"/>
<sequence length="65" mass="7326">MPKMKTKKSAAKRFKVRAGGSIKRSQAFKRHILTKKTTKNKRQLRGVAAVHASDMVSVRVMLPYA</sequence>
<dbReference type="EMBL" id="AL954747">
    <property type="protein sequence ID" value="CAD84867.1"/>
    <property type="molecule type" value="Genomic_DNA"/>
</dbReference>
<dbReference type="RefSeq" id="WP_011111565.1">
    <property type="nucleotide sequence ID" value="NC_004757.1"/>
</dbReference>
<dbReference type="SMR" id="Q82VV3"/>
<dbReference type="STRING" id="228410.NE0956"/>
<dbReference type="GeneID" id="87104148"/>
<dbReference type="KEGG" id="neu:NE0956"/>
<dbReference type="eggNOG" id="COG0291">
    <property type="taxonomic scope" value="Bacteria"/>
</dbReference>
<dbReference type="HOGENOM" id="CLU_169643_1_0_4"/>
<dbReference type="OrthoDB" id="47476at2"/>
<dbReference type="PhylomeDB" id="Q82VV3"/>
<dbReference type="Proteomes" id="UP000001416">
    <property type="component" value="Chromosome"/>
</dbReference>
<dbReference type="GO" id="GO:0022625">
    <property type="term" value="C:cytosolic large ribosomal subunit"/>
    <property type="evidence" value="ECO:0007669"/>
    <property type="project" value="TreeGrafter"/>
</dbReference>
<dbReference type="GO" id="GO:0003735">
    <property type="term" value="F:structural constituent of ribosome"/>
    <property type="evidence" value="ECO:0007669"/>
    <property type="project" value="InterPro"/>
</dbReference>
<dbReference type="GO" id="GO:0006412">
    <property type="term" value="P:translation"/>
    <property type="evidence" value="ECO:0007669"/>
    <property type="project" value="UniProtKB-UniRule"/>
</dbReference>
<dbReference type="FunFam" id="4.10.410.60:FF:000001">
    <property type="entry name" value="50S ribosomal protein L35"/>
    <property type="match status" value="1"/>
</dbReference>
<dbReference type="Gene3D" id="4.10.410.60">
    <property type="match status" value="1"/>
</dbReference>
<dbReference type="HAMAP" id="MF_00514">
    <property type="entry name" value="Ribosomal_bL35"/>
    <property type="match status" value="1"/>
</dbReference>
<dbReference type="InterPro" id="IPR001706">
    <property type="entry name" value="Ribosomal_bL35"/>
</dbReference>
<dbReference type="InterPro" id="IPR021137">
    <property type="entry name" value="Ribosomal_bL35-like"/>
</dbReference>
<dbReference type="InterPro" id="IPR018265">
    <property type="entry name" value="Ribosomal_bL35_CS"/>
</dbReference>
<dbReference type="InterPro" id="IPR037229">
    <property type="entry name" value="Ribosomal_bL35_sf"/>
</dbReference>
<dbReference type="NCBIfam" id="TIGR00001">
    <property type="entry name" value="rpmI_bact"/>
    <property type="match status" value="1"/>
</dbReference>
<dbReference type="PANTHER" id="PTHR33343">
    <property type="entry name" value="54S RIBOSOMAL PROTEIN BL35M"/>
    <property type="match status" value="1"/>
</dbReference>
<dbReference type="PANTHER" id="PTHR33343:SF1">
    <property type="entry name" value="LARGE RIBOSOMAL SUBUNIT PROTEIN BL35M"/>
    <property type="match status" value="1"/>
</dbReference>
<dbReference type="Pfam" id="PF01632">
    <property type="entry name" value="Ribosomal_L35p"/>
    <property type="match status" value="1"/>
</dbReference>
<dbReference type="PRINTS" id="PR00064">
    <property type="entry name" value="RIBOSOMALL35"/>
</dbReference>
<dbReference type="SUPFAM" id="SSF143034">
    <property type="entry name" value="L35p-like"/>
    <property type="match status" value="1"/>
</dbReference>
<dbReference type="PROSITE" id="PS00936">
    <property type="entry name" value="RIBOSOMAL_L35"/>
    <property type="match status" value="1"/>
</dbReference>
<accession>Q82VV3</accession>
<keyword id="KW-1185">Reference proteome</keyword>
<keyword id="KW-0687">Ribonucleoprotein</keyword>
<keyword id="KW-0689">Ribosomal protein</keyword>
<gene>
    <name evidence="1" type="primary">rpmI</name>
    <name type="ordered locus">NE0956</name>
</gene>
<evidence type="ECO:0000255" key="1">
    <source>
        <dbReference type="HAMAP-Rule" id="MF_00514"/>
    </source>
</evidence>
<evidence type="ECO:0000305" key="2"/>
<name>RL35_NITEU</name>
<feature type="chain" id="PRO_0000177391" description="Large ribosomal subunit protein bL35">
    <location>
        <begin position="1"/>
        <end position="65"/>
    </location>
</feature>
<organism>
    <name type="scientific">Nitrosomonas europaea (strain ATCC 19718 / CIP 103999 / KCTC 2705 / NBRC 14298)</name>
    <dbReference type="NCBI Taxonomy" id="228410"/>
    <lineage>
        <taxon>Bacteria</taxon>
        <taxon>Pseudomonadati</taxon>
        <taxon>Pseudomonadota</taxon>
        <taxon>Betaproteobacteria</taxon>
        <taxon>Nitrosomonadales</taxon>
        <taxon>Nitrosomonadaceae</taxon>
        <taxon>Nitrosomonas</taxon>
    </lineage>
</organism>
<comment type="similarity">
    <text evidence="1">Belongs to the bacterial ribosomal protein bL35 family.</text>
</comment>
<reference key="1">
    <citation type="journal article" date="2003" name="J. Bacteriol.">
        <title>Complete genome sequence of the ammonia-oxidizing bacterium and obligate chemolithoautotroph Nitrosomonas europaea.</title>
        <authorList>
            <person name="Chain P."/>
            <person name="Lamerdin J.E."/>
            <person name="Larimer F.W."/>
            <person name="Regala W."/>
            <person name="Lao V."/>
            <person name="Land M.L."/>
            <person name="Hauser L."/>
            <person name="Hooper A.B."/>
            <person name="Klotz M.G."/>
            <person name="Norton J."/>
            <person name="Sayavedra-Soto L.A."/>
            <person name="Arciero D.M."/>
            <person name="Hommes N.G."/>
            <person name="Whittaker M.M."/>
            <person name="Arp D.J."/>
        </authorList>
    </citation>
    <scope>NUCLEOTIDE SEQUENCE [LARGE SCALE GENOMIC DNA]</scope>
    <source>
        <strain>ATCC 19718 / CIP 103999 / KCTC 2705 / NBRC 14298</strain>
    </source>
</reference>